<feature type="chain" id="PRO_0000308649" description="WUSCHEL-related homeobox 12">
    <location>
        <begin position="1"/>
        <end position="515"/>
    </location>
</feature>
<feature type="DNA-binding region" description="Homeobox; WUS-type" evidence="2">
    <location>
        <begin position="68"/>
        <end position="132"/>
    </location>
</feature>
<feature type="region of interest" description="Disordered" evidence="3">
    <location>
        <begin position="23"/>
        <end position="76"/>
    </location>
</feature>
<feature type="region of interest" description="Disordered" evidence="3">
    <location>
        <begin position="130"/>
        <end position="156"/>
    </location>
</feature>
<feature type="region of interest" description="Disordered" evidence="3">
    <location>
        <begin position="176"/>
        <end position="195"/>
    </location>
</feature>
<feature type="compositionally biased region" description="Polar residues" evidence="3">
    <location>
        <begin position="23"/>
        <end position="32"/>
    </location>
</feature>
<feature type="compositionally biased region" description="Polar residues" evidence="3">
    <location>
        <begin position="44"/>
        <end position="57"/>
    </location>
</feature>
<feature type="compositionally biased region" description="Basic and acidic residues" evidence="3">
    <location>
        <begin position="62"/>
        <end position="71"/>
    </location>
</feature>
<feature type="compositionally biased region" description="Basic residues" evidence="3">
    <location>
        <begin position="130"/>
        <end position="143"/>
    </location>
</feature>
<feature type="compositionally biased region" description="Low complexity" evidence="3">
    <location>
        <begin position="144"/>
        <end position="156"/>
    </location>
</feature>
<feature type="compositionally biased region" description="Low complexity" evidence="3">
    <location>
        <begin position="177"/>
        <end position="195"/>
    </location>
</feature>
<protein>
    <recommendedName>
        <fullName>WUSCHEL-related homeobox 12</fullName>
    </recommendedName>
    <alternativeName>
        <fullName>OsWOX12</fullName>
    </alternativeName>
    <alternativeName>
        <fullName>Protein WOX9C</fullName>
    </alternativeName>
</protein>
<name>WOX12_ORYSJ</name>
<accession>A3B6V0</accession>
<accession>A0AAT4</accession>
<accession>Q6AUF7</accession>
<dbReference type="EMBL" id="AC124143">
    <property type="protein sequence ID" value="AAT77402.1"/>
    <property type="status" value="ALT_SEQ"/>
    <property type="molecule type" value="Genomic_DNA"/>
</dbReference>
<dbReference type="EMBL" id="AP014961">
    <property type="status" value="NOT_ANNOTATED_CDS"/>
    <property type="molecule type" value="Genomic_DNA"/>
</dbReference>
<dbReference type="EMBL" id="CM000142">
    <property type="status" value="NOT_ANNOTATED_CDS"/>
    <property type="molecule type" value="Genomic_DNA"/>
</dbReference>
<dbReference type="EMBL" id="AM234753">
    <property type="protein sequence ID" value="CAJ84145.1"/>
    <property type="molecule type" value="mRNA"/>
</dbReference>
<dbReference type="SMR" id="A3B6V0"/>
<dbReference type="FunCoup" id="A3B6V0">
    <property type="interactions" value="152"/>
</dbReference>
<dbReference type="STRING" id="39947.A3B6V0"/>
<dbReference type="PaxDb" id="39947-A3B6V0"/>
<dbReference type="EnsemblPlants" id="Os05t0564500-01">
    <property type="protein sequence ID" value="Os05t0564500-01"/>
    <property type="gene ID" value="Os05g0564500"/>
</dbReference>
<dbReference type="Gramene" id="Os05t0564500-01">
    <property type="protein sequence ID" value="Os05t0564500-01"/>
    <property type="gene ID" value="Os05g0564500"/>
</dbReference>
<dbReference type="eggNOG" id="ENOG502QVSY">
    <property type="taxonomic scope" value="Eukaryota"/>
</dbReference>
<dbReference type="HOGENOM" id="CLU_191894_0_0_1"/>
<dbReference type="InParanoid" id="A3B6V0"/>
<dbReference type="OrthoDB" id="1935198at2759"/>
<dbReference type="Proteomes" id="UP000000763">
    <property type="component" value="Chromosome 5"/>
</dbReference>
<dbReference type="Proteomes" id="UP000007752">
    <property type="component" value="Chromosome 5"/>
</dbReference>
<dbReference type="Proteomes" id="UP000059680">
    <property type="component" value="Chromosome 5"/>
</dbReference>
<dbReference type="GO" id="GO:0005634">
    <property type="term" value="C:nucleus"/>
    <property type="evidence" value="ECO:0007669"/>
    <property type="project" value="UniProtKB-SubCell"/>
</dbReference>
<dbReference type="GO" id="GO:0003677">
    <property type="term" value="F:DNA binding"/>
    <property type="evidence" value="ECO:0007669"/>
    <property type="project" value="UniProtKB-KW"/>
</dbReference>
<dbReference type="GO" id="GO:0003700">
    <property type="term" value="F:DNA-binding transcription factor activity"/>
    <property type="evidence" value="ECO:0007669"/>
    <property type="project" value="InterPro"/>
</dbReference>
<dbReference type="GO" id="GO:0050793">
    <property type="term" value="P:regulation of developmental process"/>
    <property type="evidence" value="ECO:0007669"/>
    <property type="project" value="InterPro"/>
</dbReference>
<dbReference type="CDD" id="cd00086">
    <property type="entry name" value="homeodomain"/>
    <property type="match status" value="1"/>
</dbReference>
<dbReference type="FunFam" id="1.10.10.60:FF:000118">
    <property type="entry name" value="WUSCHEL-related homeobox 11"/>
    <property type="match status" value="1"/>
</dbReference>
<dbReference type="Gene3D" id="1.10.10.60">
    <property type="entry name" value="Homeodomain-like"/>
    <property type="match status" value="1"/>
</dbReference>
<dbReference type="InterPro" id="IPR001356">
    <property type="entry name" value="HD"/>
</dbReference>
<dbReference type="InterPro" id="IPR009057">
    <property type="entry name" value="Homeodomain-like_sf"/>
</dbReference>
<dbReference type="InterPro" id="IPR044557">
    <property type="entry name" value="WOX8/9-like"/>
</dbReference>
<dbReference type="PANTHER" id="PTHR47288:SF2">
    <property type="entry name" value="WUSCHEL-RELATED HOMEOBOX 12"/>
    <property type="match status" value="1"/>
</dbReference>
<dbReference type="PANTHER" id="PTHR47288">
    <property type="entry name" value="WUSCHEL-RELATED HOMEOBOX 9"/>
    <property type="match status" value="1"/>
</dbReference>
<dbReference type="Pfam" id="PF00046">
    <property type="entry name" value="Homeodomain"/>
    <property type="match status" value="1"/>
</dbReference>
<dbReference type="SMART" id="SM00389">
    <property type="entry name" value="HOX"/>
    <property type="match status" value="1"/>
</dbReference>
<dbReference type="SUPFAM" id="SSF46689">
    <property type="entry name" value="Homeodomain-like"/>
    <property type="match status" value="1"/>
</dbReference>
<dbReference type="PROSITE" id="PS50071">
    <property type="entry name" value="HOMEOBOX_2"/>
    <property type="match status" value="1"/>
</dbReference>
<organism>
    <name type="scientific">Oryza sativa subsp. japonica</name>
    <name type="common">Rice</name>
    <dbReference type="NCBI Taxonomy" id="39947"/>
    <lineage>
        <taxon>Eukaryota</taxon>
        <taxon>Viridiplantae</taxon>
        <taxon>Streptophyta</taxon>
        <taxon>Embryophyta</taxon>
        <taxon>Tracheophyta</taxon>
        <taxon>Spermatophyta</taxon>
        <taxon>Magnoliopsida</taxon>
        <taxon>Liliopsida</taxon>
        <taxon>Poales</taxon>
        <taxon>Poaceae</taxon>
        <taxon>BOP clade</taxon>
        <taxon>Oryzoideae</taxon>
        <taxon>Oryzeae</taxon>
        <taxon>Oryzinae</taxon>
        <taxon>Oryza</taxon>
        <taxon>Oryza sativa</taxon>
    </lineage>
</organism>
<evidence type="ECO:0000250" key="1"/>
<evidence type="ECO:0000255" key="2">
    <source>
        <dbReference type="PROSITE-ProRule" id="PRU00108"/>
    </source>
</evidence>
<evidence type="ECO:0000256" key="3">
    <source>
        <dbReference type="SAM" id="MobiDB-lite"/>
    </source>
</evidence>
<evidence type="ECO:0000305" key="4"/>
<sequence>MASPNRHWPSMFRSNLACNIQQQQQPDMNGNGSSSSSFLLSPPTAATTGNGKPSLLSSGCEEGTRNPEPKPRWNPRPEQIRILEGIFNSGMVNPPRDEIRRIRLQLQEYGQVGDANVFYWFQNRKSRTKNKLRAAGHHHHHGRAAALPRASAPPSTNIVLPSAAAAAPLTPPRRHLLAATSSSSSSSDRSSGSSKSVKPAAAALLTSAAIDLFSPAPAPTTQLPACQLYYHSHPTPLARDDQLITSPESSSLLLQWPASQYMPATELGGVLGSSSHTQTPAAITTHPSTISPSVLLGLCNEALGQHQQETMDDMMITCSNPSKVFDHHSMDDMSCTDAVSAVNRDDEKARLGLLHYGIGVTAAANPAPHHHHHHHHLASPVHDAVSAADASTAAMILPFTTTAAATPSNVVATSSALADQLQGLLDAGLLQGGAAPPPPSATVVAVSRDDETMCTKTTSYSFPATMHLNVKMFGEAAVLVRYSGEPVLVDDSGVTVEPLQQGATYYVLVSEEAVH</sequence>
<comment type="function">
    <text evidence="1">Transcription factor which may be involved in developmental processes.</text>
</comment>
<comment type="subcellular location">
    <subcellularLocation>
        <location evidence="2">Nucleus</location>
    </subcellularLocation>
</comment>
<comment type="similarity">
    <text evidence="4">Belongs to the WUS homeobox family.</text>
</comment>
<comment type="sequence caution" evidence="4">
    <conflict type="erroneous gene model prediction">
        <sequence resource="EMBL-CDS" id="AAT77402"/>
    </conflict>
</comment>
<reference key="1">
    <citation type="journal article" date="2005" name="Mol. Genet. Genomics">
        <title>A fine physical map of the rice chromosome 5.</title>
        <authorList>
            <person name="Cheng C.-H."/>
            <person name="Chung M.C."/>
            <person name="Liu S.-M."/>
            <person name="Chen S.-K."/>
            <person name="Kao F.Y."/>
            <person name="Lin S.-J."/>
            <person name="Hsiao S.-H."/>
            <person name="Tseng I.C."/>
            <person name="Hsing Y.-I.C."/>
            <person name="Wu H.-P."/>
            <person name="Chen C.-S."/>
            <person name="Shaw J.-F."/>
            <person name="Wu J."/>
            <person name="Matsumoto T."/>
            <person name="Sasaki T."/>
            <person name="Chen H.-C."/>
            <person name="Chow T.-Y."/>
        </authorList>
    </citation>
    <scope>NUCLEOTIDE SEQUENCE [LARGE SCALE GENOMIC DNA]</scope>
    <source>
        <strain>cv. Nipponbare</strain>
    </source>
</reference>
<reference key="2">
    <citation type="journal article" date="2005" name="Nature">
        <title>The map-based sequence of the rice genome.</title>
        <authorList>
            <consortium name="International rice genome sequencing project (IRGSP)"/>
        </authorList>
    </citation>
    <scope>NUCLEOTIDE SEQUENCE [LARGE SCALE GENOMIC DNA]</scope>
    <source>
        <strain>cv. Nipponbare</strain>
    </source>
</reference>
<reference key="3">
    <citation type="journal article" date="2013" name="Rice">
        <title>Improvement of the Oryza sativa Nipponbare reference genome using next generation sequence and optical map data.</title>
        <authorList>
            <person name="Kawahara Y."/>
            <person name="de la Bastide M."/>
            <person name="Hamilton J.P."/>
            <person name="Kanamori H."/>
            <person name="McCombie W.R."/>
            <person name="Ouyang S."/>
            <person name="Schwartz D.C."/>
            <person name="Tanaka T."/>
            <person name="Wu J."/>
            <person name="Zhou S."/>
            <person name="Childs K.L."/>
            <person name="Davidson R.M."/>
            <person name="Lin H."/>
            <person name="Quesada-Ocampo L."/>
            <person name="Vaillancourt B."/>
            <person name="Sakai H."/>
            <person name="Lee S.S."/>
            <person name="Kim J."/>
            <person name="Numa H."/>
            <person name="Itoh T."/>
            <person name="Buell C.R."/>
            <person name="Matsumoto T."/>
        </authorList>
    </citation>
    <scope>GENOME REANNOTATION</scope>
    <source>
        <strain>cv. Nipponbare</strain>
    </source>
</reference>
<reference key="4">
    <citation type="journal article" date="2005" name="PLoS Biol.">
        <title>The genomes of Oryza sativa: a history of duplications.</title>
        <authorList>
            <person name="Yu J."/>
            <person name="Wang J."/>
            <person name="Lin W."/>
            <person name="Li S."/>
            <person name="Li H."/>
            <person name="Zhou J."/>
            <person name="Ni P."/>
            <person name="Dong W."/>
            <person name="Hu S."/>
            <person name="Zeng C."/>
            <person name="Zhang J."/>
            <person name="Zhang Y."/>
            <person name="Li R."/>
            <person name="Xu Z."/>
            <person name="Li S."/>
            <person name="Li X."/>
            <person name="Zheng H."/>
            <person name="Cong L."/>
            <person name="Lin L."/>
            <person name="Yin J."/>
            <person name="Geng J."/>
            <person name="Li G."/>
            <person name="Shi J."/>
            <person name="Liu J."/>
            <person name="Lv H."/>
            <person name="Li J."/>
            <person name="Wang J."/>
            <person name="Deng Y."/>
            <person name="Ran L."/>
            <person name="Shi X."/>
            <person name="Wang X."/>
            <person name="Wu Q."/>
            <person name="Li C."/>
            <person name="Ren X."/>
            <person name="Wang J."/>
            <person name="Wang X."/>
            <person name="Li D."/>
            <person name="Liu D."/>
            <person name="Zhang X."/>
            <person name="Ji Z."/>
            <person name="Zhao W."/>
            <person name="Sun Y."/>
            <person name="Zhang Z."/>
            <person name="Bao J."/>
            <person name="Han Y."/>
            <person name="Dong L."/>
            <person name="Ji J."/>
            <person name="Chen P."/>
            <person name="Wu S."/>
            <person name="Liu J."/>
            <person name="Xiao Y."/>
            <person name="Bu D."/>
            <person name="Tan J."/>
            <person name="Yang L."/>
            <person name="Ye C."/>
            <person name="Zhang J."/>
            <person name="Xu J."/>
            <person name="Zhou Y."/>
            <person name="Yu Y."/>
            <person name="Zhang B."/>
            <person name="Zhuang S."/>
            <person name="Wei H."/>
            <person name="Liu B."/>
            <person name="Lei M."/>
            <person name="Yu H."/>
            <person name="Li Y."/>
            <person name="Xu H."/>
            <person name="Wei S."/>
            <person name="He X."/>
            <person name="Fang L."/>
            <person name="Zhang Z."/>
            <person name="Zhang Y."/>
            <person name="Huang X."/>
            <person name="Su Z."/>
            <person name="Tong W."/>
            <person name="Li J."/>
            <person name="Tong Z."/>
            <person name="Li S."/>
            <person name="Ye J."/>
            <person name="Wang L."/>
            <person name="Fang L."/>
            <person name="Lei T."/>
            <person name="Chen C.-S."/>
            <person name="Chen H.-C."/>
            <person name="Xu Z."/>
            <person name="Li H."/>
            <person name="Huang H."/>
            <person name="Zhang F."/>
            <person name="Xu H."/>
            <person name="Li N."/>
            <person name="Zhao C."/>
            <person name="Li S."/>
            <person name="Dong L."/>
            <person name="Huang Y."/>
            <person name="Li L."/>
            <person name="Xi Y."/>
            <person name="Qi Q."/>
            <person name="Li W."/>
            <person name="Zhang B."/>
            <person name="Hu W."/>
            <person name="Zhang Y."/>
            <person name="Tian X."/>
            <person name="Jiao Y."/>
            <person name="Liang X."/>
            <person name="Jin J."/>
            <person name="Gao L."/>
            <person name="Zheng W."/>
            <person name="Hao B."/>
            <person name="Liu S.-M."/>
            <person name="Wang W."/>
            <person name="Yuan L."/>
            <person name="Cao M."/>
            <person name="McDermott J."/>
            <person name="Samudrala R."/>
            <person name="Wang J."/>
            <person name="Wong G.K.-S."/>
            <person name="Yang H."/>
        </authorList>
    </citation>
    <scope>NUCLEOTIDE SEQUENCE [LARGE SCALE GENOMIC DNA]</scope>
    <source>
        <strain>cv. Nipponbare</strain>
    </source>
</reference>
<reference key="5">
    <citation type="journal article" date="2006" name="Mol. Biol. Evol.">
        <title>The shoot stem cell niche in angiosperms: expression patterns of WUS orthologues in rice and maize imply major modifications in the course of mono- and dicot evolution.</title>
        <authorList>
            <person name="Nardmann J."/>
            <person name="Werr W."/>
        </authorList>
    </citation>
    <scope>NUCLEOTIDE SEQUENCE [MRNA] OF 68-132</scope>
</reference>
<gene>
    <name type="primary">WOX12</name>
    <name type="ordered locus">Os05g0564500</name>
    <name type="ordered locus">LOC_Os05g48990</name>
    <name type="ORF">OsJ_018772</name>
    <name type="ORF">OSJNBb0053D02.14</name>
</gene>
<proteinExistence type="evidence at transcript level"/>
<keyword id="KW-0217">Developmental protein</keyword>
<keyword id="KW-0238">DNA-binding</keyword>
<keyword id="KW-0371">Homeobox</keyword>
<keyword id="KW-0539">Nucleus</keyword>
<keyword id="KW-1185">Reference proteome</keyword>
<keyword id="KW-0804">Transcription</keyword>
<keyword id="KW-0805">Transcription regulation</keyword>